<gene>
    <name evidence="1" type="primary">coaA</name>
    <name type="ordered locus">YE0276</name>
</gene>
<accession>A1JIH1</accession>
<organism>
    <name type="scientific">Yersinia enterocolitica serotype O:8 / biotype 1B (strain NCTC 13174 / 8081)</name>
    <dbReference type="NCBI Taxonomy" id="393305"/>
    <lineage>
        <taxon>Bacteria</taxon>
        <taxon>Pseudomonadati</taxon>
        <taxon>Pseudomonadota</taxon>
        <taxon>Gammaproteobacteria</taxon>
        <taxon>Enterobacterales</taxon>
        <taxon>Yersiniaceae</taxon>
        <taxon>Yersinia</taxon>
    </lineage>
</organism>
<dbReference type="EC" id="2.7.1.33" evidence="1"/>
<dbReference type="EMBL" id="AM286415">
    <property type="protein sequence ID" value="CAL10409.1"/>
    <property type="molecule type" value="Genomic_DNA"/>
</dbReference>
<dbReference type="RefSeq" id="WP_005165813.1">
    <property type="nucleotide sequence ID" value="NC_008800.1"/>
</dbReference>
<dbReference type="RefSeq" id="YP_001004659.1">
    <property type="nucleotide sequence ID" value="NC_008800.1"/>
</dbReference>
<dbReference type="SMR" id="A1JIH1"/>
<dbReference type="GeneID" id="31411422"/>
<dbReference type="KEGG" id="yen:YE0276"/>
<dbReference type="PATRIC" id="fig|393305.7.peg.369"/>
<dbReference type="eggNOG" id="COG1072">
    <property type="taxonomic scope" value="Bacteria"/>
</dbReference>
<dbReference type="HOGENOM" id="CLU_053818_1_1_6"/>
<dbReference type="OrthoDB" id="1550976at2"/>
<dbReference type="UniPathway" id="UPA00241">
    <property type="reaction ID" value="UER00352"/>
</dbReference>
<dbReference type="Proteomes" id="UP000000642">
    <property type="component" value="Chromosome"/>
</dbReference>
<dbReference type="GO" id="GO:0005737">
    <property type="term" value="C:cytoplasm"/>
    <property type="evidence" value="ECO:0007669"/>
    <property type="project" value="UniProtKB-SubCell"/>
</dbReference>
<dbReference type="GO" id="GO:0005524">
    <property type="term" value="F:ATP binding"/>
    <property type="evidence" value="ECO:0007669"/>
    <property type="project" value="UniProtKB-UniRule"/>
</dbReference>
<dbReference type="GO" id="GO:0004594">
    <property type="term" value="F:pantothenate kinase activity"/>
    <property type="evidence" value="ECO:0007669"/>
    <property type="project" value="UniProtKB-UniRule"/>
</dbReference>
<dbReference type="GO" id="GO:0015937">
    <property type="term" value="P:coenzyme A biosynthetic process"/>
    <property type="evidence" value="ECO:0007669"/>
    <property type="project" value="UniProtKB-UniRule"/>
</dbReference>
<dbReference type="CDD" id="cd02025">
    <property type="entry name" value="PanK"/>
    <property type="match status" value="1"/>
</dbReference>
<dbReference type="FunFam" id="3.40.50.300:FF:000242">
    <property type="entry name" value="Pantothenate kinase"/>
    <property type="match status" value="1"/>
</dbReference>
<dbReference type="Gene3D" id="3.40.50.300">
    <property type="entry name" value="P-loop containing nucleotide triphosphate hydrolases"/>
    <property type="match status" value="1"/>
</dbReference>
<dbReference type="HAMAP" id="MF_00215">
    <property type="entry name" value="Pantothen_kinase_1"/>
    <property type="match status" value="1"/>
</dbReference>
<dbReference type="InterPro" id="IPR027417">
    <property type="entry name" value="P-loop_NTPase"/>
</dbReference>
<dbReference type="InterPro" id="IPR004566">
    <property type="entry name" value="PanK"/>
</dbReference>
<dbReference type="InterPro" id="IPR006083">
    <property type="entry name" value="PRK/URK"/>
</dbReference>
<dbReference type="NCBIfam" id="TIGR00554">
    <property type="entry name" value="panK_bact"/>
    <property type="match status" value="1"/>
</dbReference>
<dbReference type="PANTHER" id="PTHR10285">
    <property type="entry name" value="URIDINE KINASE"/>
    <property type="match status" value="1"/>
</dbReference>
<dbReference type="Pfam" id="PF00485">
    <property type="entry name" value="PRK"/>
    <property type="match status" value="1"/>
</dbReference>
<dbReference type="PIRSF" id="PIRSF000545">
    <property type="entry name" value="Pantothenate_kin"/>
    <property type="match status" value="1"/>
</dbReference>
<dbReference type="SUPFAM" id="SSF52540">
    <property type="entry name" value="P-loop containing nucleoside triphosphate hydrolases"/>
    <property type="match status" value="1"/>
</dbReference>
<name>COAA_YERE8</name>
<evidence type="ECO:0000255" key="1">
    <source>
        <dbReference type="HAMAP-Rule" id="MF_00215"/>
    </source>
</evidence>
<feature type="chain" id="PRO_1000043274" description="Pantothenate kinase">
    <location>
        <begin position="1"/>
        <end position="316"/>
    </location>
</feature>
<feature type="binding site" evidence="1">
    <location>
        <begin position="95"/>
        <end position="102"/>
    </location>
    <ligand>
        <name>ATP</name>
        <dbReference type="ChEBI" id="CHEBI:30616"/>
    </ligand>
</feature>
<comment type="catalytic activity">
    <reaction evidence="1">
        <text>(R)-pantothenate + ATP = (R)-4'-phosphopantothenate + ADP + H(+)</text>
        <dbReference type="Rhea" id="RHEA:16373"/>
        <dbReference type="ChEBI" id="CHEBI:10986"/>
        <dbReference type="ChEBI" id="CHEBI:15378"/>
        <dbReference type="ChEBI" id="CHEBI:29032"/>
        <dbReference type="ChEBI" id="CHEBI:30616"/>
        <dbReference type="ChEBI" id="CHEBI:456216"/>
        <dbReference type="EC" id="2.7.1.33"/>
    </reaction>
</comment>
<comment type="pathway">
    <text evidence="1">Cofactor biosynthesis; coenzyme A biosynthesis; CoA from (R)-pantothenate: step 1/5.</text>
</comment>
<comment type="subcellular location">
    <subcellularLocation>
        <location evidence="1">Cytoplasm</location>
    </subcellularLocation>
</comment>
<comment type="similarity">
    <text evidence="1">Belongs to the prokaryotic pantothenate kinase family.</text>
</comment>
<keyword id="KW-0067">ATP-binding</keyword>
<keyword id="KW-0173">Coenzyme A biosynthesis</keyword>
<keyword id="KW-0963">Cytoplasm</keyword>
<keyword id="KW-0418">Kinase</keyword>
<keyword id="KW-0547">Nucleotide-binding</keyword>
<keyword id="KW-0808">Transferase</keyword>
<reference key="1">
    <citation type="journal article" date="2006" name="PLoS Genet.">
        <title>The complete genome sequence and comparative genome analysis of the high pathogenicity Yersinia enterocolitica strain 8081.</title>
        <authorList>
            <person name="Thomson N.R."/>
            <person name="Howard S."/>
            <person name="Wren B.W."/>
            <person name="Holden M.T.G."/>
            <person name="Crossman L."/>
            <person name="Challis G.L."/>
            <person name="Churcher C."/>
            <person name="Mungall K."/>
            <person name="Brooks K."/>
            <person name="Chillingworth T."/>
            <person name="Feltwell T."/>
            <person name="Abdellah Z."/>
            <person name="Hauser H."/>
            <person name="Jagels K."/>
            <person name="Maddison M."/>
            <person name="Moule S."/>
            <person name="Sanders M."/>
            <person name="Whitehead S."/>
            <person name="Quail M.A."/>
            <person name="Dougan G."/>
            <person name="Parkhill J."/>
            <person name="Prentice M.B."/>
        </authorList>
    </citation>
    <scope>NUCLEOTIDE SEQUENCE [LARGE SCALE GENOMIC DNA]</scope>
    <source>
        <strain>NCTC 13174 / 8081</strain>
    </source>
</reference>
<protein>
    <recommendedName>
        <fullName evidence="1">Pantothenate kinase</fullName>
        <ecNumber evidence="1">2.7.1.33</ecNumber>
    </recommendedName>
    <alternativeName>
        <fullName evidence="1">Pantothenic acid kinase</fullName>
    </alternativeName>
</protein>
<proteinExistence type="inferred from homology"/>
<sequence>MTKRDQSLATPYLQFDRTQWAALRDSVPLTLTEEEIVKLKGINEDLSLDEVAQIYLPLSRLLNFYISSNLRRQAVLEQFLGTDGQRIPYVIGIAGSVAVGKSTTARLLQALLSRWPEHRSVELITTDGFLYPNKVLNERGLMKKKGFPQSYDMHSLVKFVSEVKSGADHVTAPVYSHLIYDIVPDGNKIIKQPDILILEGLNVLQSGMDYPHDPHHVFVSDFVDFSIYVDAPEDLLQSWYINRFLKFRQGAFSNPDSYFHNYAKLPETEAVKIATQLWKEINGLNLKQNILPTRERASLIMTKSANHAVESVRLRK</sequence>